<dbReference type="SMR" id="P83664"/>
<dbReference type="GO" id="GO:0019028">
    <property type="term" value="C:viral capsid"/>
    <property type="evidence" value="ECO:0007669"/>
    <property type="project" value="UniProtKB-KW"/>
</dbReference>
<sequence length="289" mass="33395">MALSFKNSSGVLKAKTLKDGFVTSSDIETTVHDFSYEKPDLSSVDGFSLKSLLSSDGWHIVVAYQSVTNSERLNNNKKNNKTQRFKLFTFDIIVIPGLKPNKSKNVVSYNRFMALCIGMICYHKKWKVFNWSNKRYEDNKNTINFNEDDDFMNKLAMSAGFSKEHKYHWFYSTGFEYTFDIFPAEVIAMSLFRWSHRVELKIKYEHESDLVAPMVRQVTKRGNISDVMDIVGKDIIAKKYEEIVKDRSSIGIGTKYNDILDEFKDIFNKIDSSSLDSTIKNCFNKIDGE</sequence>
<organismHost>
    <name type="scientific">Hordeum vulgare</name>
    <name type="common">Barley</name>
    <dbReference type="NCBI Taxonomy" id="4513"/>
</organismHost>
<organismHost>
    <name type="scientific">Triticum aestivum</name>
    <name type="common">Wheat</name>
    <dbReference type="NCBI Taxonomy" id="4565"/>
</organismHost>
<organismHost>
    <name type="scientific">Zea mays</name>
    <name type="common">Maize</name>
    <dbReference type="NCBI Taxonomy" id="4577"/>
</organismHost>
<feature type="initiator methionine" description="Removed" evidence="1">
    <location>
        <position position="1"/>
    </location>
</feature>
<feature type="chain" id="PRO_0000222947" description="Capsid protein">
    <location>
        <begin position="2"/>
        <end position="289"/>
    </location>
</feature>
<feature type="modified residue" description="N-acetylalanine; by host" evidence="1">
    <location>
        <position position="2"/>
    </location>
</feature>
<feature type="sequence variant" evidence="1">
    <original>E</original>
    <variation>D</variation>
    <location>
        <position position="205"/>
    </location>
</feature>
<feature type="sequence variant" evidence="1">
    <original>E</original>
    <variation>N</variation>
    <location>
        <position position="205"/>
    </location>
</feature>
<feature type="sequence variant" evidence="1">
    <original>I</original>
    <variation>L</variation>
    <location>
        <position position="235"/>
    </location>
</feature>
<feature type="sequence variant" evidence="1">
    <original>I</original>
    <variation>T</variation>
    <location>
        <position position="235"/>
    </location>
</feature>
<feature type="sequence variant">
    <original>DSS</original>
    <variation>NST</variation>
    <location>
        <begin position="271"/>
        <end position="273"/>
    </location>
</feature>
<feature type="sequence variant" evidence="1">
    <original>ID</original>
    <variation>T</variation>
    <location>
        <begin position="286"/>
        <end position="287"/>
    </location>
</feature>
<reference evidence="2" key="1">
    <citation type="journal article" date="2004" name="Plant Dis.">
        <title>Biological and molecular variability among high plains virus isolates.</title>
        <authorList>
            <person name="Seifers D.L."/>
            <person name="She Y.-M."/>
            <person name="Harvey T.L."/>
            <person name="Martin T.J."/>
            <person name="Haber S."/>
            <person name="Ens W."/>
            <person name="Standing K.G."/>
            <person name="Louie R."/>
            <person name="Gordon D.T."/>
        </authorList>
        <dbReference type="AGRICOLA" id="IND43708726"/>
    </citation>
    <scope>PROTEIN SEQUENCE OF 2-289</scope>
    <scope>ACETYLATION AT ALA-2</scope>
    <scope>VARIANTS ASN-205; ASP-205; LEU-235; THR-235; 271-ASP--SER-273 DELINS ASN-SER-THR AND 286-ILE-ASP-287 DELINS THR</scope>
</reference>
<protein>
    <recommendedName>
        <fullName>Capsid protein</fullName>
    </recommendedName>
    <alternativeName>
        <fullName>Coat protein</fullName>
    </alternativeName>
</protein>
<evidence type="ECO:0000269" key="1">
    <source ref="1"/>
</evidence>
<evidence type="ECO:0000305" key="2"/>
<comment type="subcellular location">
    <subcellularLocation>
        <location evidence="2">Virion</location>
    </subcellularLocation>
</comment>
<comment type="similarity">
    <text evidence="2">Belongs to the high plain virus capsid family.</text>
</comment>
<organism evidence="2">
    <name type="scientific">High plains virus (isolate Colorado 96)</name>
    <dbReference type="NCBI Taxonomy" id="247483"/>
    <lineage>
        <taxon>Viruses</taxon>
        <taxon>Riboviria</taxon>
        <taxon>dsRNA viruses</taxon>
        <taxon>High Plains virus</taxon>
    </lineage>
</organism>
<accession>P83664</accession>
<keyword id="KW-0007">Acetylation</keyword>
<keyword id="KW-0167">Capsid protein</keyword>
<keyword id="KW-0903">Direct protein sequencing</keyword>
<keyword id="KW-0946">Virion</keyword>
<name>CAPSD_HPVCO</name>
<proteinExistence type="evidence at protein level"/>